<reference key="1">
    <citation type="journal article" date="2002" name="Proc. Natl. Acad. Sci. U.S.A.">
        <title>Complete genome sequence of Clostridium perfringens, an anaerobic flesh-eater.</title>
        <authorList>
            <person name="Shimizu T."/>
            <person name="Ohtani K."/>
            <person name="Hirakawa H."/>
            <person name="Ohshima K."/>
            <person name="Yamashita A."/>
            <person name="Shiba T."/>
            <person name="Ogasawara N."/>
            <person name="Hattori M."/>
            <person name="Kuhara S."/>
            <person name="Hayashi H."/>
        </authorList>
    </citation>
    <scope>NUCLEOTIDE SEQUENCE [LARGE SCALE GENOMIC DNA]</scope>
    <source>
        <strain>13 / Type A</strain>
    </source>
</reference>
<reference key="2">
    <citation type="journal article" date="1989" name="J. Gen. Appl. Microbiol.">
        <title>The primary structure of Clostridium perfringens ferredoxin.</title>
        <authorList>
            <person name="Seki Y."/>
            <person name="Seki S."/>
            <person name="Ishimoto M."/>
        </authorList>
    </citation>
    <scope>PROTEIN SEQUENCE OF 2-56</scope>
</reference>
<proteinExistence type="evidence at protein level"/>
<gene>
    <name type="primary">fer</name>
    <name type="ordered locus">CPE2447</name>
</gene>
<dbReference type="EMBL" id="BA000016">
    <property type="protein sequence ID" value="BAB82153.1"/>
    <property type="molecule type" value="Genomic_DNA"/>
</dbReference>
<dbReference type="PIR" id="JX0144">
    <property type="entry name" value="JX0144"/>
</dbReference>
<dbReference type="RefSeq" id="WP_003452217.1">
    <property type="nucleotide sequence ID" value="NC_003366.1"/>
</dbReference>
<dbReference type="SMR" id="P22846"/>
<dbReference type="STRING" id="195102.gene:10491765"/>
<dbReference type="KEGG" id="cpe:CPE2447"/>
<dbReference type="HOGENOM" id="CLU_139698_11_4_9"/>
<dbReference type="Proteomes" id="UP000000818">
    <property type="component" value="Chromosome"/>
</dbReference>
<dbReference type="GO" id="GO:0005737">
    <property type="term" value="C:cytoplasm"/>
    <property type="evidence" value="ECO:0007669"/>
    <property type="project" value="TreeGrafter"/>
</dbReference>
<dbReference type="GO" id="GO:0051539">
    <property type="term" value="F:4 iron, 4 sulfur cluster binding"/>
    <property type="evidence" value="ECO:0007669"/>
    <property type="project" value="UniProtKB-KW"/>
</dbReference>
<dbReference type="GO" id="GO:0009055">
    <property type="term" value="F:electron transfer activity"/>
    <property type="evidence" value="ECO:0007669"/>
    <property type="project" value="InterPro"/>
</dbReference>
<dbReference type="GO" id="GO:0046872">
    <property type="term" value="F:metal ion binding"/>
    <property type="evidence" value="ECO:0007669"/>
    <property type="project" value="UniProtKB-KW"/>
</dbReference>
<dbReference type="FunFam" id="3.30.70.20:FF:000045">
    <property type="entry name" value="Ferredoxin, 4Fe-4S"/>
    <property type="match status" value="1"/>
</dbReference>
<dbReference type="Gene3D" id="3.30.70.20">
    <property type="match status" value="1"/>
</dbReference>
<dbReference type="InterPro" id="IPR017896">
    <property type="entry name" value="4Fe4S_Fe-S-bd"/>
</dbReference>
<dbReference type="InterPro" id="IPR017900">
    <property type="entry name" value="4Fe4S_Fe_S_CS"/>
</dbReference>
<dbReference type="InterPro" id="IPR000813">
    <property type="entry name" value="7Fe_ferredoxin"/>
</dbReference>
<dbReference type="InterPro" id="IPR050157">
    <property type="entry name" value="PSI_iron-sulfur_center"/>
</dbReference>
<dbReference type="PANTHER" id="PTHR24960:SF79">
    <property type="entry name" value="PHOTOSYSTEM I IRON-SULFUR CENTER"/>
    <property type="match status" value="1"/>
</dbReference>
<dbReference type="PANTHER" id="PTHR24960">
    <property type="entry name" value="PHOTOSYSTEM I IRON-SULFUR CENTER-RELATED"/>
    <property type="match status" value="1"/>
</dbReference>
<dbReference type="Pfam" id="PF12838">
    <property type="entry name" value="Fer4_7"/>
    <property type="match status" value="1"/>
</dbReference>
<dbReference type="PRINTS" id="PR00354">
    <property type="entry name" value="7FE8SFRDOXIN"/>
</dbReference>
<dbReference type="SUPFAM" id="SSF54862">
    <property type="entry name" value="4Fe-4S ferredoxins"/>
    <property type="match status" value="1"/>
</dbReference>
<dbReference type="PROSITE" id="PS00198">
    <property type="entry name" value="4FE4S_FER_1"/>
    <property type="match status" value="2"/>
</dbReference>
<dbReference type="PROSITE" id="PS51379">
    <property type="entry name" value="4FE4S_FER_2"/>
    <property type="match status" value="2"/>
</dbReference>
<protein>
    <recommendedName>
        <fullName>Ferredoxin</fullName>
    </recommendedName>
</protein>
<comment type="function">
    <text>Ferredoxins are iron-sulfur proteins that transfer electrons in a wide variety of metabolic reactions.</text>
</comment>
<comment type="cofactor">
    <cofactor>
        <name>[4Fe-4S] cluster</name>
        <dbReference type="ChEBI" id="CHEBI:49883"/>
    </cofactor>
    <text>Binds 2 [4Fe-4S] clusters.</text>
</comment>
<sequence>MAYKILDTCVSCGACAAECPVDAISQGDTQFVIDADTCIDCGNCANVCPVGAPVQE</sequence>
<name>FER_CLOPE</name>
<evidence type="ECO:0000250" key="1"/>
<evidence type="ECO:0000255" key="2">
    <source>
        <dbReference type="PROSITE-ProRule" id="PRU00711"/>
    </source>
</evidence>
<evidence type="ECO:0000269" key="3">
    <source ref="2"/>
</evidence>
<feature type="initiator methionine" description="Removed" evidence="3">
    <location>
        <position position="1"/>
    </location>
</feature>
<feature type="chain" id="PRO_0000159112" description="Ferredoxin">
    <location>
        <begin position="2"/>
        <end position="56"/>
    </location>
</feature>
<feature type="domain" description="4Fe-4S ferredoxin-type 1" evidence="2">
    <location>
        <begin position="2"/>
        <end position="28"/>
    </location>
</feature>
<feature type="domain" description="4Fe-4S ferredoxin-type 2" evidence="2">
    <location>
        <begin position="29"/>
        <end position="56"/>
    </location>
</feature>
<feature type="binding site" evidence="1">
    <location>
        <position position="9"/>
    </location>
    <ligand>
        <name>[4Fe-4S] cluster</name>
        <dbReference type="ChEBI" id="CHEBI:49883"/>
        <label>1</label>
    </ligand>
</feature>
<feature type="binding site" evidence="1">
    <location>
        <position position="12"/>
    </location>
    <ligand>
        <name>[4Fe-4S] cluster</name>
        <dbReference type="ChEBI" id="CHEBI:49883"/>
        <label>1</label>
    </ligand>
</feature>
<feature type="binding site" evidence="1">
    <location>
        <position position="15"/>
    </location>
    <ligand>
        <name>[4Fe-4S] cluster</name>
        <dbReference type="ChEBI" id="CHEBI:49883"/>
        <label>1</label>
    </ligand>
</feature>
<feature type="binding site" evidence="1">
    <location>
        <position position="19"/>
    </location>
    <ligand>
        <name>[4Fe-4S] cluster</name>
        <dbReference type="ChEBI" id="CHEBI:49883"/>
        <label>2</label>
    </ligand>
</feature>
<feature type="binding site" evidence="1">
    <location>
        <position position="38"/>
    </location>
    <ligand>
        <name>[4Fe-4S] cluster</name>
        <dbReference type="ChEBI" id="CHEBI:49883"/>
        <label>2</label>
    </ligand>
</feature>
<feature type="binding site" evidence="1">
    <location>
        <position position="41"/>
    </location>
    <ligand>
        <name>[4Fe-4S] cluster</name>
        <dbReference type="ChEBI" id="CHEBI:49883"/>
        <label>2</label>
    </ligand>
</feature>
<feature type="binding site" evidence="1">
    <location>
        <position position="44"/>
    </location>
    <ligand>
        <name>[4Fe-4S] cluster</name>
        <dbReference type="ChEBI" id="CHEBI:49883"/>
        <label>2</label>
    </ligand>
</feature>
<feature type="binding site" evidence="1">
    <location>
        <position position="48"/>
    </location>
    <ligand>
        <name>[4Fe-4S] cluster</name>
        <dbReference type="ChEBI" id="CHEBI:49883"/>
        <label>1</label>
    </ligand>
</feature>
<accession>P22846</accession>
<keyword id="KW-0004">4Fe-4S</keyword>
<keyword id="KW-0903">Direct protein sequencing</keyword>
<keyword id="KW-0249">Electron transport</keyword>
<keyword id="KW-0408">Iron</keyword>
<keyword id="KW-0411">Iron-sulfur</keyword>
<keyword id="KW-0479">Metal-binding</keyword>
<keyword id="KW-1185">Reference proteome</keyword>
<keyword id="KW-0677">Repeat</keyword>
<keyword id="KW-0813">Transport</keyword>
<organism>
    <name type="scientific">Clostridium perfringens (strain 13 / Type A)</name>
    <dbReference type="NCBI Taxonomy" id="195102"/>
    <lineage>
        <taxon>Bacteria</taxon>
        <taxon>Bacillati</taxon>
        <taxon>Bacillota</taxon>
        <taxon>Clostridia</taxon>
        <taxon>Eubacteriales</taxon>
        <taxon>Clostridiaceae</taxon>
        <taxon>Clostridium</taxon>
    </lineage>
</organism>